<feature type="chain" id="PRO_1000062430" description="Putative septation protein SpoVG">
    <location>
        <begin position="1"/>
        <end position="90"/>
    </location>
</feature>
<sequence length="90" mass="10299">MNITDVRIRKISAEGKMKAIVSVTFENQFVVHDIKVIEGQNGLFIAMPSRKTPDGEFKDIAHPINTETREQIQKAILDEYEKVKNLDVQE</sequence>
<protein>
    <recommendedName>
        <fullName evidence="1">Putative septation protein SpoVG</fullName>
    </recommendedName>
</protein>
<proteinExistence type="inferred from homology"/>
<gene>
    <name evidence="1" type="primary">spoVG</name>
    <name type="ordered locus">CPF_2814</name>
</gene>
<dbReference type="EMBL" id="CP000246">
    <property type="protein sequence ID" value="ABG83255.1"/>
    <property type="molecule type" value="Genomic_DNA"/>
</dbReference>
<dbReference type="RefSeq" id="WP_003450704.1">
    <property type="nucleotide sequence ID" value="NC_008261.1"/>
</dbReference>
<dbReference type="SMR" id="Q0TMG2"/>
<dbReference type="STRING" id="195103.CPF_2814"/>
<dbReference type="PaxDb" id="195103-CPF_2814"/>
<dbReference type="GeneID" id="93000905"/>
<dbReference type="KEGG" id="cpf:CPF_2814"/>
<dbReference type="eggNOG" id="COG2088">
    <property type="taxonomic scope" value="Bacteria"/>
</dbReference>
<dbReference type="HOGENOM" id="CLU_103669_2_0_9"/>
<dbReference type="Proteomes" id="UP000001823">
    <property type="component" value="Chromosome"/>
</dbReference>
<dbReference type="GO" id="GO:0000917">
    <property type="term" value="P:division septum assembly"/>
    <property type="evidence" value="ECO:0007669"/>
    <property type="project" value="UniProtKB-KW"/>
</dbReference>
<dbReference type="GO" id="GO:0030435">
    <property type="term" value="P:sporulation resulting in formation of a cellular spore"/>
    <property type="evidence" value="ECO:0007669"/>
    <property type="project" value="InterPro"/>
</dbReference>
<dbReference type="Gene3D" id="3.30.1120.40">
    <property type="entry name" value="Stage V sporulation protein G"/>
    <property type="match status" value="1"/>
</dbReference>
<dbReference type="HAMAP" id="MF_00819">
    <property type="entry name" value="SpoVG"/>
    <property type="match status" value="1"/>
</dbReference>
<dbReference type="InterPro" id="IPR007170">
    <property type="entry name" value="SpoVG"/>
</dbReference>
<dbReference type="InterPro" id="IPR036751">
    <property type="entry name" value="SpoVG_sf"/>
</dbReference>
<dbReference type="NCBIfam" id="NF009749">
    <property type="entry name" value="PRK13259.1"/>
    <property type="match status" value="1"/>
</dbReference>
<dbReference type="PANTHER" id="PTHR38429">
    <property type="entry name" value="SEPTATION PROTEIN SPOVG-RELATED"/>
    <property type="match status" value="1"/>
</dbReference>
<dbReference type="PANTHER" id="PTHR38429:SF1">
    <property type="entry name" value="SEPTATION PROTEIN SPOVG-RELATED"/>
    <property type="match status" value="1"/>
</dbReference>
<dbReference type="Pfam" id="PF04026">
    <property type="entry name" value="SpoVG"/>
    <property type="match status" value="1"/>
</dbReference>
<dbReference type="SUPFAM" id="SSF160537">
    <property type="entry name" value="SpoVG-like"/>
    <property type="match status" value="1"/>
</dbReference>
<accession>Q0TMG2</accession>
<evidence type="ECO:0000255" key="1">
    <source>
        <dbReference type="HAMAP-Rule" id="MF_00819"/>
    </source>
</evidence>
<reference key="1">
    <citation type="journal article" date="2006" name="Genome Res.">
        <title>Skewed genomic variability in strains of the toxigenic bacterial pathogen, Clostridium perfringens.</title>
        <authorList>
            <person name="Myers G.S.A."/>
            <person name="Rasko D.A."/>
            <person name="Cheung J.K."/>
            <person name="Ravel J."/>
            <person name="Seshadri R."/>
            <person name="DeBoy R.T."/>
            <person name="Ren Q."/>
            <person name="Varga J."/>
            <person name="Awad M.M."/>
            <person name="Brinkac L.M."/>
            <person name="Daugherty S.C."/>
            <person name="Haft D.H."/>
            <person name="Dodson R.J."/>
            <person name="Madupu R."/>
            <person name="Nelson W.C."/>
            <person name="Rosovitz M.J."/>
            <person name="Sullivan S.A."/>
            <person name="Khouri H."/>
            <person name="Dimitrov G.I."/>
            <person name="Watkins K.L."/>
            <person name="Mulligan S."/>
            <person name="Benton J."/>
            <person name="Radune D."/>
            <person name="Fisher D.J."/>
            <person name="Atkins H.S."/>
            <person name="Hiscox T."/>
            <person name="Jost B.H."/>
            <person name="Billington S.J."/>
            <person name="Songer J.G."/>
            <person name="McClane B.A."/>
            <person name="Titball R.W."/>
            <person name="Rood J.I."/>
            <person name="Melville S.B."/>
            <person name="Paulsen I.T."/>
        </authorList>
    </citation>
    <scope>NUCLEOTIDE SEQUENCE [LARGE SCALE GENOMIC DNA]</scope>
    <source>
        <strain>ATCC 13124 / DSM 756 / JCM 1290 / NCIMB 6125 / NCTC 8237 / S 107 / Type A</strain>
    </source>
</reference>
<name>SP5G_CLOP1</name>
<keyword id="KW-0131">Cell cycle</keyword>
<keyword id="KW-0132">Cell division</keyword>
<keyword id="KW-0717">Septation</keyword>
<organism>
    <name type="scientific">Clostridium perfringens (strain ATCC 13124 / DSM 756 / JCM 1290 / NCIMB 6125 / NCTC 8237 / Type A)</name>
    <dbReference type="NCBI Taxonomy" id="195103"/>
    <lineage>
        <taxon>Bacteria</taxon>
        <taxon>Bacillati</taxon>
        <taxon>Bacillota</taxon>
        <taxon>Clostridia</taxon>
        <taxon>Eubacteriales</taxon>
        <taxon>Clostridiaceae</taxon>
        <taxon>Clostridium</taxon>
    </lineage>
</organism>
<comment type="function">
    <text evidence="1">Could be involved in septation.</text>
</comment>
<comment type="similarity">
    <text evidence="1">Belongs to the SpoVG family.</text>
</comment>